<keyword id="KW-0963">Cytoplasm</keyword>
<keyword id="KW-0342">GTP-binding</keyword>
<keyword id="KW-0378">Hydrolase</keyword>
<keyword id="KW-0460">Magnesium</keyword>
<keyword id="KW-0479">Metal-binding</keyword>
<keyword id="KW-0547">Nucleotide-binding</keyword>
<keyword id="KW-1185">Reference proteome</keyword>
<feature type="chain" id="PRO_0000386120" description="GTPase Obg">
    <location>
        <begin position="1"/>
        <end position="346"/>
    </location>
</feature>
<feature type="domain" description="Obg" evidence="2">
    <location>
        <begin position="1"/>
        <end position="158"/>
    </location>
</feature>
<feature type="domain" description="OBG-type G" evidence="1">
    <location>
        <begin position="159"/>
        <end position="327"/>
    </location>
</feature>
<feature type="binding site" evidence="1">
    <location>
        <begin position="165"/>
        <end position="172"/>
    </location>
    <ligand>
        <name>GTP</name>
        <dbReference type="ChEBI" id="CHEBI:37565"/>
    </ligand>
</feature>
<feature type="binding site" evidence="1">
    <location>
        <position position="172"/>
    </location>
    <ligand>
        <name>Mg(2+)</name>
        <dbReference type="ChEBI" id="CHEBI:18420"/>
    </ligand>
</feature>
<feature type="binding site" evidence="1">
    <location>
        <begin position="190"/>
        <end position="194"/>
    </location>
    <ligand>
        <name>GTP</name>
        <dbReference type="ChEBI" id="CHEBI:37565"/>
    </ligand>
</feature>
<feature type="binding site" evidence="1">
    <location>
        <position position="192"/>
    </location>
    <ligand>
        <name>Mg(2+)</name>
        <dbReference type="ChEBI" id="CHEBI:18420"/>
    </ligand>
</feature>
<feature type="binding site" evidence="1">
    <location>
        <begin position="212"/>
        <end position="215"/>
    </location>
    <ligand>
        <name>GTP</name>
        <dbReference type="ChEBI" id="CHEBI:37565"/>
    </ligand>
</feature>
<feature type="binding site" evidence="1">
    <location>
        <begin position="279"/>
        <end position="282"/>
    </location>
    <ligand>
        <name>GTP</name>
        <dbReference type="ChEBI" id="CHEBI:37565"/>
    </ligand>
</feature>
<feature type="binding site" evidence="1">
    <location>
        <begin position="308"/>
        <end position="310"/>
    </location>
    <ligand>
        <name>GTP</name>
        <dbReference type="ChEBI" id="CHEBI:37565"/>
    </ligand>
</feature>
<organism>
    <name type="scientific">Phenylobacterium zucineum (strain HLK1)</name>
    <dbReference type="NCBI Taxonomy" id="450851"/>
    <lineage>
        <taxon>Bacteria</taxon>
        <taxon>Pseudomonadati</taxon>
        <taxon>Pseudomonadota</taxon>
        <taxon>Alphaproteobacteria</taxon>
        <taxon>Caulobacterales</taxon>
        <taxon>Caulobacteraceae</taxon>
        <taxon>Phenylobacterium</taxon>
    </lineage>
</organism>
<protein>
    <recommendedName>
        <fullName evidence="1">GTPase Obg</fullName>
        <ecNumber evidence="1">3.6.5.-</ecNumber>
    </recommendedName>
    <alternativeName>
        <fullName evidence="1">GTP-binding protein Obg</fullName>
    </alternativeName>
</protein>
<dbReference type="EC" id="3.6.5.-" evidence="1"/>
<dbReference type="EMBL" id="CP000747">
    <property type="protein sequence ID" value="ACG76668.1"/>
    <property type="molecule type" value="Genomic_DNA"/>
</dbReference>
<dbReference type="RefSeq" id="WP_012520816.1">
    <property type="nucleotide sequence ID" value="NC_011144.1"/>
</dbReference>
<dbReference type="SMR" id="B4RD64"/>
<dbReference type="STRING" id="450851.PHZ_c0254"/>
<dbReference type="KEGG" id="pzu:PHZ_c0254"/>
<dbReference type="eggNOG" id="COG0536">
    <property type="taxonomic scope" value="Bacteria"/>
</dbReference>
<dbReference type="HOGENOM" id="CLU_011747_2_0_5"/>
<dbReference type="OrthoDB" id="9807318at2"/>
<dbReference type="Proteomes" id="UP000001868">
    <property type="component" value="Chromosome"/>
</dbReference>
<dbReference type="GO" id="GO:0005737">
    <property type="term" value="C:cytoplasm"/>
    <property type="evidence" value="ECO:0007669"/>
    <property type="project" value="UniProtKB-SubCell"/>
</dbReference>
<dbReference type="GO" id="GO:0005525">
    <property type="term" value="F:GTP binding"/>
    <property type="evidence" value="ECO:0007669"/>
    <property type="project" value="UniProtKB-UniRule"/>
</dbReference>
<dbReference type="GO" id="GO:0003924">
    <property type="term" value="F:GTPase activity"/>
    <property type="evidence" value="ECO:0007669"/>
    <property type="project" value="UniProtKB-UniRule"/>
</dbReference>
<dbReference type="GO" id="GO:0000287">
    <property type="term" value="F:magnesium ion binding"/>
    <property type="evidence" value="ECO:0007669"/>
    <property type="project" value="InterPro"/>
</dbReference>
<dbReference type="GO" id="GO:0042254">
    <property type="term" value="P:ribosome biogenesis"/>
    <property type="evidence" value="ECO:0007669"/>
    <property type="project" value="UniProtKB-UniRule"/>
</dbReference>
<dbReference type="CDD" id="cd01898">
    <property type="entry name" value="Obg"/>
    <property type="match status" value="1"/>
</dbReference>
<dbReference type="FunFam" id="2.70.210.12:FF:000001">
    <property type="entry name" value="GTPase Obg"/>
    <property type="match status" value="1"/>
</dbReference>
<dbReference type="Gene3D" id="2.70.210.12">
    <property type="entry name" value="GTP1/OBG domain"/>
    <property type="match status" value="1"/>
</dbReference>
<dbReference type="Gene3D" id="3.40.50.300">
    <property type="entry name" value="P-loop containing nucleotide triphosphate hydrolases"/>
    <property type="match status" value="1"/>
</dbReference>
<dbReference type="HAMAP" id="MF_01454">
    <property type="entry name" value="GTPase_Obg"/>
    <property type="match status" value="1"/>
</dbReference>
<dbReference type="InterPro" id="IPR031167">
    <property type="entry name" value="G_OBG"/>
</dbReference>
<dbReference type="InterPro" id="IPR006073">
    <property type="entry name" value="GTP-bd"/>
</dbReference>
<dbReference type="InterPro" id="IPR014100">
    <property type="entry name" value="GTP-bd_Obg/CgtA"/>
</dbReference>
<dbReference type="InterPro" id="IPR006074">
    <property type="entry name" value="GTP1-OBG_CS"/>
</dbReference>
<dbReference type="InterPro" id="IPR006169">
    <property type="entry name" value="GTP1_OBG_dom"/>
</dbReference>
<dbReference type="InterPro" id="IPR036726">
    <property type="entry name" value="GTP1_OBG_dom_sf"/>
</dbReference>
<dbReference type="InterPro" id="IPR045086">
    <property type="entry name" value="OBG_GTPase"/>
</dbReference>
<dbReference type="InterPro" id="IPR027417">
    <property type="entry name" value="P-loop_NTPase"/>
</dbReference>
<dbReference type="NCBIfam" id="TIGR02729">
    <property type="entry name" value="Obg_CgtA"/>
    <property type="match status" value="1"/>
</dbReference>
<dbReference type="NCBIfam" id="NF008955">
    <property type="entry name" value="PRK12297.1"/>
    <property type="match status" value="1"/>
</dbReference>
<dbReference type="NCBIfam" id="NF008956">
    <property type="entry name" value="PRK12299.1"/>
    <property type="match status" value="1"/>
</dbReference>
<dbReference type="PANTHER" id="PTHR11702">
    <property type="entry name" value="DEVELOPMENTALLY REGULATED GTP-BINDING PROTEIN-RELATED"/>
    <property type="match status" value="1"/>
</dbReference>
<dbReference type="PANTHER" id="PTHR11702:SF31">
    <property type="entry name" value="MITOCHONDRIAL RIBOSOME-ASSOCIATED GTPASE 2"/>
    <property type="match status" value="1"/>
</dbReference>
<dbReference type="Pfam" id="PF01018">
    <property type="entry name" value="GTP1_OBG"/>
    <property type="match status" value="1"/>
</dbReference>
<dbReference type="Pfam" id="PF01926">
    <property type="entry name" value="MMR_HSR1"/>
    <property type="match status" value="1"/>
</dbReference>
<dbReference type="PIRSF" id="PIRSF002401">
    <property type="entry name" value="GTP_bd_Obg/CgtA"/>
    <property type="match status" value="1"/>
</dbReference>
<dbReference type="PRINTS" id="PR00326">
    <property type="entry name" value="GTP1OBG"/>
</dbReference>
<dbReference type="SUPFAM" id="SSF82051">
    <property type="entry name" value="Obg GTP-binding protein N-terminal domain"/>
    <property type="match status" value="1"/>
</dbReference>
<dbReference type="SUPFAM" id="SSF52540">
    <property type="entry name" value="P-loop containing nucleoside triphosphate hydrolases"/>
    <property type="match status" value="1"/>
</dbReference>
<dbReference type="PROSITE" id="PS51710">
    <property type="entry name" value="G_OBG"/>
    <property type="match status" value="1"/>
</dbReference>
<dbReference type="PROSITE" id="PS00905">
    <property type="entry name" value="GTP1_OBG"/>
    <property type="match status" value="1"/>
</dbReference>
<dbReference type="PROSITE" id="PS51883">
    <property type="entry name" value="OBG"/>
    <property type="match status" value="1"/>
</dbReference>
<name>OBG_PHEZH</name>
<comment type="function">
    <text evidence="1">An essential GTPase which binds GTP, GDP and possibly (p)ppGpp with moderate affinity, with high nucleotide exchange rates and a fairly low GTP hydrolysis rate. Plays a role in control of the cell cycle, stress response, ribosome biogenesis and in those bacteria that undergo differentiation, in morphogenesis control.</text>
</comment>
<comment type="cofactor">
    <cofactor evidence="1">
        <name>Mg(2+)</name>
        <dbReference type="ChEBI" id="CHEBI:18420"/>
    </cofactor>
</comment>
<comment type="subunit">
    <text evidence="1">Monomer.</text>
</comment>
<comment type="subcellular location">
    <subcellularLocation>
        <location evidence="1">Cytoplasm</location>
    </subcellularLocation>
</comment>
<comment type="similarity">
    <text evidence="1">Belongs to the TRAFAC class OBG-HflX-like GTPase superfamily. OBG GTPase family.</text>
</comment>
<proteinExistence type="inferred from homology"/>
<evidence type="ECO:0000255" key="1">
    <source>
        <dbReference type="HAMAP-Rule" id="MF_01454"/>
    </source>
</evidence>
<evidence type="ECO:0000255" key="2">
    <source>
        <dbReference type="PROSITE-ProRule" id="PRU01231"/>
    </source>
</evidence>
<gene>
    <name evidence="1" type="primary">obg</name>
    <name type="ordered locus">PHZ_c0254</name>
</gene>
<reference key="1">
    <citation type="journal article" date="2008" name="BMC Genomics">
        <title>Complete genome of Phenylobacterium zucineum - a novel facultative intracellular bacterium isolated from human erythroleukemia cell line K562.</title>
        <authorList>
            <person name="Luo Y."/>
            <person name="Xu X."/>
            <person name="Ding Z."/>
            <person name="Liu Z."/>
            <person name="Zhang B."/>
            <person name="Yan Z."/>
            <person name="Sun J."/>
            <person name="Hu S."/>
            <person name="Hu X."/>
        </authorList>
    </citation>
    <scope>NUCLEOTIDE SEQUENCE [LARGE SCALE GENOMIC DNA]</scope>
    <source>
        <strain>HLK1</strain>
    </source>
</reference>
<sequence length="346" mass="36920">MKFLDQVKIYVRSGNGGAGAVSFRREKYIEYGGPDGGDGGRGGDVWIEAVEGLNTLIDYRYQQHFKAGTGVHGMGRNRHGAAGEDVVLKVPVGTEVLDEDKNLIVDMDEAGKRYLLAKGGNGGFGNTHFKGPVNQAPRHANPGLPGEERAIWLRLKLIADVGLVGLPNAGKSTFLAAASAAKPKIADYPFTTLAPNLGVVDLSVGERFVLADIPGLIEGAHEGAGIGTRFLGHIERTAVLIHLVDGTQEDIVGAWRTVRHELEAYGADLADKPEILALNKIDALDEETRAEKQAQLAEAAGMDVRLVSGFTGENVTELLREAFALVRERKRAAAEEAAGPSEGWTP</sequence>
<accession>B4RD64</accession>